<evidence type="ECO:0000250" key="1">
    <source>
        <dbReference type="UniProtKB" id="Q9ZP19"/>
    </source>
</evidence>
<evidence type="ECO:0000255" key="2"/>
<evidence type="ECO:0000255" key="3">
    <source>
        <dbReference type="PROSITE-ProRule" id="PRU00498"/>
    </source>
</evidence>
<evidence type="ECO:0000269" key="4">
    <source>
    </source>
</evidence>
<evidence type="ECO:0000269" key="5">
    <source>
    </source>
</evidence>
<evidence type="ECO:0000303" key="6">
    <source>
    </source>
</evidence>
<evidence type="ECO:0000303" key="7">
    <source>
    </source>
</evidence>
<evidence type="ECO:0000305" key="8"/>
<evidence type="ECO:0000305" key="9">
    <source>
    </source>
</evidence>
<evidence type="ECO:0000305" key="10">
    <source>
    </source>
</evidence>
<accession>A0A142I737</accession>
<organism>
    <name type="scientific">Diaporthe leptostromiformis</name>
    <name type="common">Lupinosis disease fungus</name>
    <name type="synonym">Phomopsis leptostromiformis</name>
    <dbReference type="NCBI Taxonomy" id="291059"/>
    <lineage>
        <taxon>Eukaryota</taxon>
        <taxon>Fungi</taxon>
        <taxon>Dikarya</taxon>
        <taxon>Ascomycota</taxon>
        <taxon>Pezizomycotina</taxon>
        <taxon>Sordariomycetes</taxon>
        <taxon>Sordariomycetidae</taxon>
        <taxon>Diaporthales</taxon>
        <taxon>Diaporthaceae</taxon>
        <taxon>Diaporthe</taxon>
    </lineage>
</organism>
<proteinExistence type="inferred from homology"/>
<reference key="1">
    <citation type="journal article" date="2016" name="Proc. Natl. Acad. Sci. U.S.A.">
        <title>Biosynthetic investigation of phomopsins reveals a widespread pathway for ribosomal natural products in Ascomycetes.</title>
        <authorList>
            <person name="Ding W."/>
            <person name="Liu W.Q."/>
            <person name="Jia Y."/>
            <person name="Li Y."/>
            <person name="van der Donk W.A."/>
            <person name="Zhang Q."/>
        </authorList>
    </citation>
    <scope>NUCLEOTIDE SEQUENCE [GENOMIC DNA]</scope>
    <scope>FUNCTION</scope>
    <scope>DISRUPTION PHENOTYPE</scope>
    <scope>PATHWAY</scope>
    <source>
        <strain>ATCC 26115 / IMI 115107 / C 1557</strain>
    </source>
</reference>
<reference key="2">
    <citation type="journal article" date="2021" name="Angew. Chem. Int. Ed.">
        <title>Biosynthetic studies of phomopsins unveil posttranslational installation of dehydroamino acids by ustYa family proteins.</title>
        <authorList>
            <person name="Sogahata K."/>
            <person name="Ozaki T."/>
            <person name="Igarashi Y."/>
            <person name="Naganuma Y."/>
            <person name="Liu C."/>
            <person name="Minami A."/>
            <person name="Oikawa H."/>
        </authorList>
    </citation>
    <scope>NOMENCLATURE</scope>
    <scope>FUNCTION</scope>
    <source>
        <strain>ATCC 26115 / IMI 115107 / C 1557</strain>
    </source>
</reference>
<feature type="chain" id="PRO_0000458349" description="Tyrosinase-like protein phomQ1'">
    <location>
        <begin position="1"/>
        <end position="378"/>
    </location>
</feature>
<feature type="transmembrane region" description="Helical" evidence="2">
    <location>
        <begin position="42"/>
        <end position="62"/>
    </location>
</feature>
<feature type="binding site" evidence="1">
    <location>
        <position position="130"/>
    </location>
    <ligand>
        <name>Cu cation</name>
        <dbReference type="ChEBI" id="CHEBI:23378"/>
        <label>A</label>
    </ligand>
</feature>
<feature type="binding site" evidence="1">
    <location>
        <position position="139"/>
    </location>
    <ligand>
        <name>Cu cation</name>
        <dbReference type="ChEBI" id="CHEBI:23378"/>
        <label>A</label>
    </ligand>
</feature>
<feature type="binding site" evidence="1">
    <location>
        <position position="279"/>
    </location>
    <ligand>
        <name>Cu cation</name>
        <dbReference type="ChEBI" id="CHEBI:23378"/>
        <label>B</label>
    </ligand>
</feature>
<feature type="binding site" evidence="1">
    <location>
        <position position="305"/>
    </location>
    <ligand>
        <name>Cu cation</name>
        <dbReference type="ChEBI" id="CHEBI:23378"/>
        <label>B</label>
    </ligand>
</feature>
<feature type="glycosylation site" description="N-linked (GlcNAc...) asparagine" evidence="3">
    <location>
        <position position="209"/>
    </location>
</feature>
<sequence>MLWTLMSNPILIGQSTHYYDSRSSSLRQRNQPKQLLLLLLRTIIVVSVITFAAIIGCWVFLSHGTTTTNPPQQCSTPAVRKEWRSLSPSAQAKYISAVQCLMYLPSVHKEGTTLYDDFVFGHSKTGSYSHYAASFLPWHRMYLHVYERALRDHCGYSESLPYWDWTLDSHHLSASPIWDPVTGFGGDGNPGGAETLHGGRCVVDGPFANSTRAWRALSEGHNHDVEYGPHCLSRGFIINNDDRTTLDMLHGLVSPSRVAQTLDKPDYIAFFEDFESGPHNAIPQFIRGDFLTFSAPNDPVFYLHHANVDRLWWLWQQRDPVGRLYQVRGPAKDFRYHEGHEVSEGSIEDVMPMGGLAEDIKMKSVMDTRAGFLCYEYE</sequence>
<gene>
    <name evidence="7" type="primary">phomQ1'</name>
    <name evidence="6" type="synonym">phomQ</name>
    <name evidence="7" type="synonym">phomQ'</name>
</gene>
<comment type="function">
    <text evidence="4 5 10">Tyrosinase-like protein; part of the gene cluster that mediates the biosynthesis of the phomopsins, a group of hexapeptide mycotoxins which infects lupins and causes lupinosis disease in livestock (PubMed:26979951, PubMed:34608734). The pathway starts with the processing of the precursor phomA' by several endopeptidases including kexin proteases as well as the cluster-specific S41 family peptidase phomP1 and the oligopeptidase phomG' to produce 10 identical copies of the hexapeptide Tyr-Val-Ile-Pro-Ile-Asp. After being excised from the precursor peptide, the core peptides are cyclized and modified post-translationally by enzymes encoded within the gene cluster. The timing and order of proteolysis of the phomA' precursor and PTMs are still unknown. Two tyrosinase-like enzymes, phomQ1' and phomQ2, catalyze the chlorination and hydroxylation of Tyr, respectively. PhomYb, is proposed to be involved in the construction of the macrocyclic structure. The other 4 ustYa family proteins may be involved in PTMs that generate the unique structure of phomopsin A. PhomYa' is required for the hydroxylation of C-beta of Tyr. PhomYc', phomYd', and phomYe are responsible for the biosynthesis of 2,3-dehydroisoleucine (dIle), 2,3-dehydroaspartic acid (dAsp), and 3,4-dehydroproline (dPro), respectively. While dIle formation by phomYc' is indispensable for the installation of dAsp by phomYd', the order of the other PTMs have not been elucidated yet. Most of the biosynthetic enzymes likely have broad substrate specificity, and thus, there might be a metabolic grid from a precursor to phomopsin A. The enzyme(s) responsible for the biosynthesis of 3,4-dehydrovaline (dVal) have also not been identified yet. Finally, phomM' acts as an S-adenosylmethionine-dependent alpha-N-methyltransferase that catalyzes two successive N-methylation reactions, converting N-desmethyl-phomopsin A to phomopsin A and phomopsin A further to an N,N-dimethylated congener called phomopsin E (Probable).</text>
</comment>
<comment type="cofactor">
    <cofactor evidence="1">
        <name>Cu(2+)</name>
        <dbReference type="ChEBI" id="CHEBI:29036"/>
    </cofactor>
    <text evidence="1">Binds 2 copper ions per subunit.</text>
</comment>
<comment type="pathway">
    <text evidence="4">Mycotoxin biosynthesis.</text>
</comment>
<comment type="subcellular location">
    <subcellularLocation>
        <location evidence="2">Membrane</location>
        <topology evidence="2">Single-pass membrane protein</topology>
    </subcellularLocation>
</comment>
<comment type="disruption phenotype">
    <text evidence="4">Abolishes the formation of phomopsin A.</text>
</comment>
<comment type="similarity">
    <text evidence="8">Belongs to the tyrosinase family.</text>
</comment>
<protein>
    <recommendedName>
        <fullName evidence="7">Tyrosinase-like protein phomQ1'</fullName>
        <ecNumber evidence="9">1.14.18.-</ecNumber>
    </recommendedName>
    <alternativeName>
        <fullName evidence="7">Phomopsin biosynthesis cluster protein Q1'</fullName>
    </alternativeName>
</protein>
<name>PHQ12_DIALO</name>
<keyword id="KW-0186">Copper</keyword>
<keyword id="KW-0325">Glycoprotein</keyword>
<keyword id="KW-0472">Membrane</keyword>
<keyword id="KW-0479">Metal-binding</keyword>
<keyword id="KW-0503">Monooxygenase</keyword>
<keyword id="KW-0560">Oxidoreductase</keyword>
<keyword id="KW-0812">Transmembrane</keyword>
<keyword id="KW-1133">Transmembrane helix</keyword>
<dbReference type="EC" id="1.14.18.-" evidence="9"/>
<dbReference type="EMBL" id="KU645841">
    <property type="protein sequence ID" value="AMR44289.1"/>
    <property type="molecule type" value="Genomic_DNA"/>
</dbReference>
<dbReference type="SMR" id="A0A142I737"/>
<dbReference type="GO" id="GO:0016020">
    <property type="term" value="C:membrane"/>
    <property type="evidence" value="ECO:0007669"/>
    <property type="project" value="UniProtKB-SubCell"/>
</dbReference>
<dbReference type="GO" id="GO:0046872">
    <property type="term" value="F:metal ion binding"/>
    <property type="evidence" value="ECO:0007669"/>
    <property type="project" value="UniProtKB-KW"/>
</dbReference>
<dbReference type="GO" id="GO:0004497">
    <property type="term" value="F:monooxygenase activity"/>
    <property type="evidence" value="ECO:0007669"/>
    <property type="project" value="UniProtKB-KW"/>
</dbReference>
<dbReference type="Gene3D" id="1.10.1280.10">
    <property type="entry name" value="Di-copper center containing domain from catechol oxidase"/>
    <property type="match status" value="1"/>
</dbReference>
<dbReference type="InterPro" id="IPR008922">
    <property type="entry name" value="Di-copper_centre_dom_sf"/>
</dbReference>
<dbReference type="InterPro" id="IPR050316">
    <property type="entry name" value="Tyrosinase/Hemocyanin"/>
</dbReference>
<dbReference type="InterPro" id="IPR002227">
    <property type="entry name" value="Tyrosinase_Cu-bd"/>
</dbReference>
<dbReference type="PANTHER" id="PTHR11474">
    <property type="entry name" value="TYROSINASE FAMILY MEMBER"/>
    <property type="match status" value="1"/>
</dbReference>
<dbReference type="PANTHER" id="PTHR11474:SF126">
    <property type="entry name" value="TYROSINASE-LIKE PROTEIN TYR-1-RELATED"/>
    <property type="match status" value="1"/>
</dbReference>
<dbReference type="Pfam" id="PF00264">
    <property type="entry name" value="Tyrosinase"/>
    <property type="match status" value="1"/>
</dbReference>
<dbReference type="PRINTS" id="PR00092">
    <property type="entry name" value="TYROSINASE"/>
</dbReference>
<dbReference type="SUPFAM" id="SSF48056">
    <property type="entry name" value="Di-copper centre-containing domain"/>
    <property type="match status" value="1"/>
</dbReference>
<dbReference type="PROSITE" id="PS00497">
    <property type="entry name" value="TYROSINASE_1"/>
    <property type="match status" value="1"/>
</dbReference>
<dbReference type="PROSITE" id="PS00498">
    <property type="entry name" value="TYROSINASE_2"/>
    <property type="match status" value="1"/>
</dbReference>